<dbReference type="EMBL" id="AC009238">
    <property type="status" value="NOT_ANNOTATED_CDS"/>
    <property type="molecule type" value="Genomic_DNA"/>
</dbReference>
<dbReference type="EMBL" id="AC092835">
    <property type="status" value="NOT_ANNOTATED_CDS"/>
    <property type="molecule type" value="Genomic_DNA"/>
</dbReference>
<dbReference type="CCDS" id="CCDS92807.1"/>
<dbReference type="RefSeq" id="NP_001382890.1">
    <property type="nucleotide sequence ID" value="NM_001395961.1"/>
</dbReference>
<dbReference type="SMR" id="A0A087WUV0"/>
<dbReference type="BioMuta" id="ENSG00000233757"/>
<dbReference type="jPOST" id="A0A087WUV0"/>
<dbReference type="MassIVE" id="A0A087WUV0"/>
<dbReference type="PaxDb" id="9606-ENSP00000478941"/>
<dbReference type="PeptideAtlas" id="A0A087WUV0"/>
<dbReference type="Ensembl" id="ENST00000425953.6">
    <property type="protein sequence ID" value="ENSP00000478941.1"/>
    <property type="gene ID" value="ENSG00000233757.7"/>
</dbReference>
<dbReference type="GeneID" id="344065"/>
<dbReference type="MANE-Select" id="ENST00000425953.6">
    <property type="protein sequence ID" value="ENSP00000478941.1"/>
    <property type="RefSeq nucleotide sequence ID" value="NM_001395961.1"/>
    <property type="RefSeq protein sequence ID" value="NP_001382890.1"/>
</dbReference>
<dbReference type="UCSC" id="uc061ltb.1">
    <property type="organism name" value="human"/>
</dbReference>
<dbReference type="AGR" id="HGNC:38707"/>
<dbReference type="GeneCards" id="ZNF892"/>
<dbReference type="HGNC" id="HGNC:38707">
    <property type="gene designation" value="ZNF892"/>
</dbReference>
<dbReference type="VEuPathDB" id="HostDB:ENSG00000233757"/>
<dbReference type="eggNOG" id="KOG1721">
    <property type="taxonomic scope" value="Eukaryota"/>
</dbReference>
<dbReference type="GeneTree" id="ENSGT00940000154488"/>
<dbReference type="HOGENOM" id="CLU_002678_0_9_1"/>
<dbReference type="InParanoid" id="A0A087WUV0"/>
<dbReference type="OMA" id="SPDWETI"/>
<dbReference type="OrthoDB" id="8117402at2759"/>
<dbReference type="PAN-GO" id="A0A087WUV0">
    <property type="GO annotations" value="4 GO annotations based on evolutionary models"/>
</dbReference>
<dbReference type="PRO" id="PR:A0A087WUV0"/>
<dbReference type="Proteomes" id="UP000005640">
    <property type="component" value="Chromosome 2"/>
</dbReference>
<dbReference type="RNAct" id="A0A087WUV0">
    <property type="molecule type" value="protein"/>
</dbReference>
<dbReference type="Bgee" id="ENSG00000233757">
    <property type="expression patterns" value="Expressed in corpus callosum and 108 other cell types or tissues"/>
</dbReference>
<dbReference type="ExpressionAtlas" id="A0A087WUV0">
    <property type="expression patterns" value="baseline and differential"/>
</dbReference>
<dbReference type="GO" id="GO:0005634">
    <property type="term" value="C:nucleus"/>
    <property type="evidence" value="ECO:0000318"/>
    <property type="project" value="GO_Central"/>
</dbReference>
<dbReference type="GO" id="GO:0000981">
    <property type="term" value="F:DNA-binding transcription factor activity, RNA polymerase II-specific"/>
    <property type="evidence" value="ECO:0000318"/>
    <property type="project" value="GO_Central"/>
</dbReference>
<dbReference type="GO" id="GO:0000978">
    <property type="term" value="F:RNA polymerase II cis-regulatory region sequence-specific DNA binding"/>
    <property type="evidence" value="ECO:0000318"/>
    <property type="project" value="GO_Central"/>
</dbReference>
<dbReference type="GO" id="GO:0008270">
    <property type="term" value="F:zinc ion binding"/>
    <property type="evidence" value="ECO:0007669"/>
    <property type="project" value="UniProtKB-KW"/>
</dbReference>
<dbReference type="GO" id="GO:0006357">
    <property type="term" value="P:regulation of transcription by RNA polymerase II"/>
    <property type="evidence" value="ECO:0000318"/>
    <property type="project" value="GO_Central"/>
</dbReference>
<dbReference type="FunFam" id="3.30.160.60:FF:004137">
    <property type="match status" value="1"/>
</dbReference>
<dbReference type="FunFam" id="3.30.160.60:FF:000058">
    <property type="entry name" value="Zinc finger protein 2 homolog"/>
    <property type="match status" value="1"/>
</dbReference>
<dbReference type="FunFam" id="3.30.160.60:FF:000605">
    <property type="entry name" value="zinc finger protein 2 isoform X1"/>
    <property type="match status" value="1"/>
</dbReference>
<dbReference type="FunFam" id="3.30.160.60:FF:000944">
    <property type="entry name" value="zinc finger protein 232 isoform X1"/>
    <property type="match status" value="1"/>
</dbReference>
<dbReference type="FunFam" id="3.30.160.60:FF:000269">
    <property type="entry name" value="Zinc finger protein 287"/>
    <property type="match status" value="1"/>
</dbReference>
<dbReference type="FunFam" id="3.30.160.60:FF:002343">
    <property type="entry name" value="Zinc finger protein 33A"/>
    <property type="match status" value="2"/>
</dbReference>
<dbReference type="FunFam" id="3.30.160.60:FF:002402">
    <property type="entry name" value="Zinc finger protein 347"/>
    <property type="match status" value="1"/>
</dbReference>
<dbReference type="FunFam" id="3.30.160.60:FF:000016">
    <property type="entry name" value="zinc finger protein 37 homolog"/>
    <property type="match status" value="1"/>
</dbReference>
<dbReference type="FunFam" id="3.30.160.60:FF:002250">
    <property type="entry name" value="zinc finger protein 596 isoform X1"/>
    <property type="match status" value="1"/>
</dbReference>
<dbReference type="FunFam" id="3.30.160.60:FF:000102">
    <property type="entry name" value="zinc finger protein 850 isoform X1"/>
    <property type="match status" value="1"/>
</dbReference>
<dbReference type="Gene3D" id="3.30.160.60">
    <property type="entry name" value="Classic Zinc Finger"/>
    <property type="match status" value="10"/>
</dbReference>
<dbReference type="InterPro" id="IPR001909">
    <property type="entry name" value="KRAB"/>
</dbReference>
<dbReference type="InterPro" id="IPR036236">
    <property type="entry name" value="Znf_C2H2_sf"/>
</dbReference>
<dbReference type="InterPro" id="IPR013087">
    <property type="entry name" value="Znf_C2H2_type"/>
</dbReference>
<dbReference type="PANTHER" id="PTHR23226">
    <property type="entry name" value="ZINC FINGER AND SCAN DOMAIN-CONTAINING"/>
    <property type="match status" value="1"/>
</dbReference>
<dbReference type="PANTHER" id="PTHR23226:SF366">
    <property type="entry name" value="ZINC FINGER PROTEIN ZFP2"/>
    <property type="match status" value="1"/>
</dbReference>
<dbReference type="Pfam" id="PF00096">
    <property type="entry name" value="zf-C2H2"/>
    <property type="match status" value="6"/>
</dbReference>
<dbReference type="Pfam" id="PF13465">
    <property type="entry name" value="zf-H2C2_2"/>
    <property type="match status" value="2"/>
</dbReference>
<dbReference type="SMART" id="SM00349">
    <property type="entry name" value="KRAB"/>
    <property type="match status" value="1"/>
</dbReference>
<dbReference type="SMART" id="SM00355">
    <property type="entry name" value="ZnF_C2H2"/>
    <property type="match status" value="10"/>
</dbReference>
<dbReference type="SUPFAM" id="SSF57667">
    <property type="entry name" value="beta-beta-alpha zinc fingers"/>
    <property type="match status" value="6"/>
</dbReference>
<dbReference type="PROSITE" id="PS00028">
    <property type="entry name" value="ZINC_FINGER_C2H2_1"/>
    <property type="match status" value="10"/>
</dbReference>
<dbReference type="PROSITE" id="PS50157">
    <property type="entry name" value="ZINC_FINGER_C2H2_2"/>
    <property type="match status" value="10"/>
</dbReference>
<comment type="function">
    <text evidence="3">May be involved in transcriptional regulation.</text>
</comment>
<comment type="subcellular location">
    <subcellularLocation>
        <location evidence="3">Nucleus</location>
    </subcellularLocation>
</comment>
<comment type="similarity">
    <text evidence="3">Belongs to the krueppel C2H2-type zinc-finger protein family.</text>
</comment>
<feature type="chain" id="PRO_0000457398" description="Zinc finger protein 892">
    <location>
        <begin position="1"/>
        <end position="522"/>
    </location>
</feature>
<feature type="zinc finger region" description="C2H2-type 1" evidence="1">
    <location>
        <begin position="221"/>
        <end position="243"/>
    </location>
</feature>
<feature type="zinc finger region" description="C2H2-type 2" evidence="1">
    <location>
        <begin position="249"/>
        <end position="271"/>
    </location>
</feature>
<feature type="zinc finger region" description="C2H2-type 3" evidence="1">
    <location>
        <begin position="277"/>
        <end position="299"/>
    </location>
</feature>
<feature type="zinc finger region" description="C2H2-type 4" evidence="1">
    <location>
        <begin position="305"/>
        <end position="327"/>
    </location>
</feature>
<feature type="zinc finger region" description="C2H2-type 5" evidence="1">
    <location>
        <begin position="333"/>
        <end position="355"/>
    </location>
</feature>
<feature type="zinc finger region" description="C2H2-type 6" evidence="1">
    <location>
        <begin position="361"/>
        <end position="383"/>
    </location>
</feature>
<feature type="zinc finger region" description="C2H2-type 7" evidence="1">
    <location>
        <begin position="389"/>
        <end position="411"/>
    </location>
</feature>
<feature type="zinc finger region" description="C2H2-type 8" evidence="1">
    <location>
        <begin position="417"/>
        <end position="439"/>
    </location>
</feature>
<feature type="zinc finger region" description="C2H2-type 9" evidence="1">
    <location>
        <begin position="445"/>
        <end position="467"/>
    </location>
</feature>
<feature type="zinc finger region" description="C2H2-type 10" evidence="1">
    <location>
        <begin position="473"/>
        <end position="495"/>
    </location>
</feature>
<feature type="region of interest" description="Disordered" evidence="2">
    <location>
        <begin position="1"/>
        <end position="22"/>
    </location>
</feature>
<feature type="region of interest" description="Disordered" evidence="2">
    <location>
        <begin position="96"/>
        <end position="124"/>
    </location>
</feature>
<feature type="compositionally biased region" description="Basic and acidic residues" evidence="2">
    <location>
        <begin position="100"/>
        <end position="116"/>
    </location>
</feature>
<gene>
    <name evidence="4" type="primary">ZNF892</name>
</gene>
<organism>
    <name type="scientific">Homo sapiens</name>
    <name type="common">Human</name>
    <dbReference type="NCBI Taxonomy" id="9606"/>
    <lineage>
        <taxon>Eukaryota</taxon>
        <taxon>Metazoa</taxon>
        <taxon>Chordata</taxon>
        <taxon>Craniata</taxon>
        <taxon>Vertebrata</taxon>
        <taxon>Euteleostomi</taxon>
        <taxon>Mammalia</taxon>
        <taxon>Eutheria</taxon>
        <taxon>Euarchontoglires</taxon>
        <taxon>Primates</taxon>
        <taxon>Haplorrhini</taxon>
        <taxon>Catarrhini</taxon>
        <taxon>Hominidae</taxon>
        <taxon>Homo</taxon>
    </lineage>
</organism>
<evidence type="ECO:0000255" key="1">
    <source>
        <dbReference type="PROSITE-ProRule" id="PRU00042"/>
    </source>
</evidence>
<evidence type="ECO:0000256" key="2">
    <source>
        <dbReference type="SAM" id="MobiDB-lite"/>
    </source>
</evidence>
<evidence type="ECO:0000305" key="3"/>
<evidence type="ECO:0000312" key="4">
    <source>
        <dbReference type="HGNC" id="HGNC:38707"/>
    </source>
</evidence>
<proteinExistence type="evidence at protein level"/>
<accession>A0A087WUV0</accession>
<name>ZN892_HUMAN</name>
<protein>
    <recommendedName>
        <fullName evidence="3">Zinc finger protein 892</fullName>
    </recommendedName>
</protein>
<reference key="1">
    <citation type="journal article" date="2005" name="Nature">
        <title>Generation and annotation of the DNA sequences of human chromosomes 2 and 4.</title>
        <authorList>
            <person name="Hillier L.W."/>
            <person name="Graves T.A."/>
            <person name="Fulton R.S."/>
            <person name="Fulton L.A."/>
            <person name="Pepin K.H."/>
            <person name="Minx P."/>
            <person name="Wagner-McPherson C."/>
            <person name="Layman D."/>
            <person name="Wylie K."/>
            <person name="Sekhon M."/>
            <person name="Becker M.C."/>
            <person name="Fewell G.A."/>
            <person name="Delehaunty K.D."/>
            <person name="Miner T.L."/>
            <person name="Nash W.E."/>
            <person name="Kremitzki C."/>
            <person name="Oddy L."/>
            <person name="Du H."/>
            <person name="Sun H."/>
            <person name="Bradshaw-Cordum H."/>
            <person name="Ali J."/>
            <person name="Carter J."/>
            <person name="Cordes M."/>
            <person name="Harris A."/>
            <person name="Isak A."/>
            <person name="van Brunt A."/>
            <person name="Nguyen C."/>
            <person name="Du F."/>
            <person name="Courtney L."/>
            <person name="Kalicki J."/>
            <person name="Ozersky P."/>
            <person name="Abbott S."/>
            <person name="Armstrong J."/>
            <person name="Belter E.A."/>
            <person name="Caruso L."/>
            <person name="Cedroni M."/>
            <person name="Cotton M."/>
            <person name="Davidson T."/>
            <person name="Desai A."/>
            <person name="Elliott G."/>
            <person name="Erb T."/>
            <person name="Fronick C."/>
            <person name="Gaige T."/>
            <person name="Haakenson W."/>
            <person name="Haglund K."/>
            <person name="Holmes A."/>
            <person name="Harkins R."/>
            <person name="Kim K."/>
            <person name="Kruchowski S.S."/>
            <person name="Strong C.M."/>
            <person name="Grewal N."/>
            <person name="Goyea E."/>
            <person name="Hou S."/>
            <person name="Levy A."/>
            <person name="Martinka S."/>
            <person name="Mead K."/>
            <person name="McLellan M.D."/>
            <person name="Meyer R."/>
            <person name="Randall-Maher J."/>
            <person name="Tomlinson C."/>
            <person name="Dauphin-Kohlberg S."/>
            <person name="Kozlowicz-Reilly A."/>
            <person name="Shah N."/>
            <person name="Swearengen-Shahid S."/>
            <person name="Snider J."/>
            <person name="Strong J.T."/>
            <person name="Thompson J."/>
            <person name="Yoakum M."/>
            <person name="Leonard S."/>
            <person name="Pearman C."/>
            <person name="Trani L."/>
            <person name="Radionenko M."/>
            <person name="Waligorski J.E."/>
            <person name="Wang C."/>
            <person name="Rock S.M."/>
            <person name="Tin-Wollam A.-M."/>
            <person name="Maupin R."/>
            <person name="Latreille P."/>
            <person name="Wendl M.C."/>
            <person name="Yang S.-P."/>
            <person name="Pohl C."/>
            <person name="Wallis J.W."/>
            <person name="Spieth J."/>
            <person name="Bieri T.A."/>
            <person name="Berkowicz N."/>
            <person name="Nelson J.O."/>
            <person name="Osborne J."/>
            <person name="Ding L."/>
            <person name="Meyer R."/>
            <person name="Sabo A."/>
            <person name="Shotland Y."/>
            <person name="Sinha P."/>
            <person name="Wohldmann P.E."/>
            <person name="Cook L.L."/>
            <person name="Hickenbotham M.T."/>
            <person name="Eldred J."/>
            <person name="Williams D."/>
            <person name="Jones T.A."/>
            <person name="She X."/>
            <person name="Ciccarelli F.D."/>
            <person name="Izaurralde E."/>
            <person name="Taylor J."/>
            <person name="Schmutz J."/>
            <person name="Myers R.M."/>
            <person name="Cox D.R."/>
            <person name="Huang X."/>
            <person name="McPherson J.D."/>
            <person name="Mardis E.R."/>
            <person name="Clifton S.W."/>
            <person name="Warren W.C."/>
            <person name="Chinwalla A.T."/>
            <person name="Eddy S.R."/>
            <person name="Marra M.A."/>
            <person name="Ovcharenko I."/>
            <person name="Furey T.S."/>
            <person name="Miller W."/>
            <person name="Eichler E.E."/>
            <person name="Bork P."/>
            <person name="Suyama M."/>
            <person name="Torrents D."/>
            <person name="Waterston R.H."/>
            <person name="Wilson R.K."/>
        </authorList>
    </citation>
    <scope>NUCLEOTIDE SEQUENCE [LARGE SCALE GENOMIC DNA]</scope>
</reference>
<sequence>MEPEGRGSLFEDSDLLHAGNPKENDVTAVLLTPGSQELMIRDMAEALTQWRQLNSPQGDVPEKPRNLVLLGLPISTPDVISQLEHEEELEREVSKAASQKHWETIPESKELTPEKDISEEESAPGVLIVRFSKESSSECEDSLESQQENHEKHLIQEAVTEKSSRERSYQSDEFRRNCTQRSLLVQQQGERLHHCDSFKNNLKQNSDIIRHERICAGKKPWKCNECEKAFSYYSAFVLHQRIHTGEKPYECNECGKAFSQSIHLTLHQRIHTGEKPYECHECGKAFSHRSALIRHHIIHTGEKPYECNECGKAFNQSSYLTQHQRIHTGEKPYECNECGKAFSQSTFLTQHQVIHTGEKPYKCNECGKAFSDRSGLIQHQRTHTGERPYECNECGKAFGYCSALTQHQRTHTGEKPYKCNDCAKAFSDRSALIRHQRTHTGEKPYKCKDCGKAFSQSSSLTKHQKTHTGEKPYKCKECGKAFSQSSSLSQHQKTHAGVKTKKYVQALSEHLTFGQHKRIHTG</sequence>
<keyword id="KW-0479">Metal-binding</keyword>
<keyword id="KW-0539">Nucleus</keyword>
<keyword id="KW-1267">Proteomics identification</keyword>
<keyword id="KW-1185">Reference proteome</keyword>
<keyword id="KW-0677">Repeat</keyword>
<keyword id="KW-0862">Zinc</keyword>
<keyword id="KW-0863">Zinc-finger</keyword>